<gene>
    <name evidence="1" type="primary">hutI</name>
    <name type="ordered locus">XCC1581</name>
</gene>
<dbReference type="EC" id="3.5.2.7" evidence="1"/>
<dbReference type="EMBL" id="AE008922">
    <property type="protein sequence ID" value="AAM40875.1"/>
    <property type="status" value="ALT_INIT"/>
    <property type="molecule type" value="Genomic_DNA"/>
</dbReference>
<dbReference type="RefSeq" id="NP_636951.2">
    <property type="nucleotide sequence ID" value="NC_003902.1"/>
</dbReference>
<dbReference type="RefSeq" id="WP_011036762.1">
    <property type="nucleotide sequence ID" value="NC_003902.1"/>
</dbReference>
<dbReference type="SMR" id="Q8PAA6"/>
<dbReference type="STRING" id="190485.XCC1581"/>
<dbReference type="EnsemblBacteria" id="AAM40875">
    <property type="protein sequence ID" value="AAM40875"/>
    <property type="gene ID" value="XCC1581"/>
</dbReference>
<dbReference type="KEGG" id="xcc:XCC1581"/>
<dbReference type="PATRIC" id="fig|190485.4.peg.1693"/>
<dbReference type="eggNOG" id="COG1228">
    <property type="taxonomic scope" value="Bacteria"/>
</dbReference>
<dbReference type="HOGENOM" id="CLU_041647_0_1_6"/>
<dbReference type="OrthoDB" id="9776455at2"/>
<dbReference type="UniPathway" id="UPA00379">
    <property type="reaction ID" value="UER00551"/>
</dbReference>
<dbReference type="Proteomes" id="UP000001010">
    <property type="component" value="Chromosome"/>
</dbReference>
<dbReference type="GO" id="GO:0005737">
    <property type="term" value="C:cytoplasm"/>
    <property type="evidence" value="ECO:0007669"/>
    <property type="project" value="UniProtKB-SubCell"/>
</dbReference>
<dbReference type="GO" id="GO:0050480">
    <property type="term" value="F:imidazolonepropionase activity"/>
    <property type="evidence" value="ECO:0000318"/>
    <property type="project" value="GO_Central"/>
</dbReference>
<dbReference type="GO" id="GO:0005506">
    <property type="term" value="F:iron ion binding"/>
    <property type="evidence" value="ECO:0007669"/>
    <property type="project" value="UniProtKB-UniRule"/>
</dbReference>
<dbReference type="GO" id="GO:0008270">
    <property type="term" value="F:zinc ion binding"/>
    <property type="evidence" value="ECO:0007669"/>
    <property type="project" value="UniProtKB-UniRule"/>
</dbReference>
<dbReference type="GO" id="GO:0006548">
    <property type="term" value="P:L-histidine catabolic process"/>
    <property type="evidence" value="ECO:0000318"/>
    <property type="project" value="GO_Central"/>
</dbReference>
<dbReference type="GO" id="GO:0019556">
    <property type="term" value="P:L-histidine catabolic process to glutamate and formamide"/>
    <property type="evidence" value="ECO:0007669"/>
    <property type="project" value="UniProtKB-UniPathway"/>
</dbReference>
<dbReference type="GO" id="GO:0019557">
    <property type="term" value="P:L-histidine catabolic process to glutamate and formate"/>
    <property type="evidence" value="ECO:0007669"/>
    <property type="project" value="UniProtKB-UniPathway"/>
</dbReference>
<dbReference type="CDD" id="cd01296">
    <property type="entry name" value="Imidazolone-5PH"/>
    <property type="match status" value="1"/>
</dbReference>
<dbReference type="FunFam" id="3.20.20.140:FF:000007">
    <property type="entry name" value="Imidazolonepropionase"/>
    <property type="match status" value="1"/>
</dbReference>
<dbReference type="Gene3D" id="3.20.20.140">
    <property type="entry name" value="Metal-dependent hydrolases"/>
    <property type="match status" value="1"/>
</dbReference>
<dbReference type="Gene3D" id="2.30.40.10">
    <property type="entry name" value="Urease, subunit C, domain 1"/>
    <property type="match status" value="1"/>
</dbReference>
<dbReference type="HAMAP" id="MF_00372">
    <property type="entry name" value="HutI"/>
    <property type="match status" value="1"/>
</dbReference>
<dbReference type="InterPro" id="IPR006680">
    <property type="entry name" value="Amidohydro-rel"/>
</dbReference>
<dbReference type="InterPro" id="IPR005920">
    <property type="entry name" value="HutI"/>
</dbReference>
<dbReference type="InterPro" id="IPR011059">
    <property type="entry name" value="Metal-dep_hydrolase_composite"/>
</dbReference>
<dbReference type="InterPro" id="IPR032466">
    <property type="entry name" value="Metal_Hydrolase"/>
</dbReference>
<dbReference type="NCBIfam" id="TIGR01224">
    <property type="entry name" value="hutI"/>
    <property type="match status" value="1"/>
</dbReference>
<dbReference type="PANTHER" id="PTHR42752">
    <property type="entry name" value="IMIDAZOLONEPROPIONASE"/>
    <property type="match status" value="1"/>
</dbReference>
<dbReference type="PANTHER" id="PTHR42752:SF1">
    <property type="entry name" value="IMIDAZOLONEPROPIONASE-RELATED"/>
    <property type="match status" value="1"/>
</dbReference>
<dbReference type="Pfam" id="PF01979">
    <property type="entry name" value="Amidohydro_1"/>
    <property type="match status" value="1"/>
</dbReference>
<dbReference type="SUPFAM" id="SSF51338">
    <property type="entry name" value="Composite domain of metallo-dependent hydrolases"/>
    <property type="match status" value="1"/>
</dbReference>
<dbReference type="SUPFAM" id="SSF51556">
    <property type="entry name" value="Metallo-dependent hydrolases"/>
    <property type="match status" value="1"/>
</dbReference>
<feature type="chain" id="PRO_0000160976" description="Imidazolonepropionase">
    <location>
        <begin position="1"/>
        <end position="401"/>
    </location>
</feature>
<feature type="binding site" evidence="1">
    <location>
        <position position="70"/>
    </location>
    <ligand>
        <name>Fe(3+)</name>
        <dbReference type="ChEBI" id="CHEBI:29034"/>
    </ligand>
</feature>
<feature type="binding site" evidence="1">
    <location>
        <position position="70"/>
    </location>
    <ligand>
        <name>Zn(2+)</name>
        <dbReference type="ChEBI" id="CHEBI:29105"/>
    </ligand>
</feature>
<feature type="binding site" evidence="1">
    <location>
        <position position="72"/>
    </location>
    <ligand>
        <name>Fe(3+)</name>
        <dbReference type="ChEBI" id="CHEBI:29034"/>
    </ligand>
</feature>
<feature type="binding site" evidence="1">
    <location>
        <position position="72"/>
    </location>
    <ligand>
        <name>Zn(2+)</name>
        <dbReference type="ChEBI" id="CHEBI:29105"/>
    </ligand>
</feature>
<feature type="binding site" evidence="1">
    <location>
        <position position="79"/>
    </location>
    <ligand>
        <name>4-imidazolone-5-propanoate</name>
        <dbReference type="ChEBI" id="CHEBI:77893"/>
    </ligand>
</feature>
<feature type="binding site" evidence="1">
    <location>
        <position position="142"/>
    </location>
    <ligand>
        <name>4-imidazolone-5-propanoate</name>
        <dbReference type="ChEBI" id="CHEBI:77893"/>
    </ligand>
</feature>
<feature type="binding site" evidence="1">
    <location>
        <position position="142"/>
    </location>
    <ligand>
        <name>N-formimidoyl-L-glutamate</name>
        <dbReference type="ChEBI" id="CHEBI:58928"/>
    </ligand>
</feature>
<feature type="binding site" evidence="1">
    <location>
        <position position="175"/>
    </location>
    <ligand>
        <name>4-imidazolone-5-propanoate</name>
        <dbReference type="ChEBI" id="CHEBI:77893"/>
    </ligand>
</feature>
<feature type="binding site" evidence="1">
    <location>
        <position position="238"/>
    </location>
    <ligand>
        <name>Fe(3+)</name>
        <dbReference type="ChEBI" id="CHEBI:29034"/>
    </ligand>
</feature>
<feature type="binding site" evidence="1">
    <location>
        <position position="238"/>
    </location>
    <ligand>
        <name>Zn(2+)</name>
        <dbReference type="ChEBI" id="CHEBI:29105"/>
    </ligand>
</feature>
<feature type="binding site" evidence="1">
    <location>
        <position position="241"/>
    </location>
    <ligand>
        <name>4-imidazolone-5-propanoate</name>
        <dbReference type="ChEBI" id="CHEBI:77893"/>
    </ligand>
</feature>
<feature type="binding site" evidence="1">
    <location>
        <position position="313"/>
    </location>
    <ligand>
        <name>Fe(3+)</name>
        <dbReference type="ChEBI" id="CHEBI:29034"/>
    </ligand>
</feature>
<feature type="binding site" evidence="1">
    <location>
        <position position="313"/>
    </location>
    <ligand>
        <name>Zn(2+)</name>
        <dbReference type="ChEBI" id="CHEBI:29105"/>
    </ligand>
</feature>
<feature type="binding site" evidence="1">
    <location>
        <position position="315"/>
    </location>
    <ligand>
        <name>N-formimidoyl-L-glutamate</name>
        <dbReference type="ChEBI" id="CHEBI:58928"/>
    </ligand>
</feature>
<feature type="binding site" evidence="1">
    <location>
        <position position="317"/>
    </location>
    <ligand>
        <name>N-formimidoyl-L-glutamate</name>
        <dbReference type="ChEBI" id="CHEBI:58928"/>
    </ligand>
</feature>
<feature type="binding site" evidence="1">
    <location>
        <position position="318"/>
    </location>
    <ligand>
        <name>4-imidazolone-5-propanoate</name>
        <dbReference type="ChEBI" id="CHEBI:77893"/>
    </ligand>
</feature>
<sequence>MHCDVLWHNARLMTLDAGDGGLGSVDDGVVACQDGTIVYAGPAADAPPLQASHVHDCQRRWISPGLIDCHTHLVYAGNRANEFEQRLRGASYAQIAAAGGGIVATVRATRAADDAALLAASLPRLDALLAEGVTTLEIKSGYGLTLEDEIKQLRVARQLATLRQVEVVPTFLGAHAVPPGAQGQTYIDAVCQEMIPAVAAQGLAEAVDVFCEHLAFSPAQAEQVFVAARAHGLQIKIHAEQLSNQHGAALAARYGALSADHIEYLDQAGIDAMANAGTVAVLLPGAFYFTRDTQLPPIPALRAAGVPLALATDCNPGTSPLTSPLLAMNMAATLFRMTVDGCITGFTREAARALGRGNRLGRLRAGMQCDLAIWDIDAPADLVYRMGFNPLHTRVWRGHPC</sequence>
<reference key="1">
    <citation type="journal article" date="2002" name="Nature">
        <title>Comparison of the genomes of two Xanthomonas pathogens with differing host specificities.</title>
        <authorList>
            <person name="da Silva A.C.R."/>
            <person name="Ferro J.A."/>
            <person name="Reinach F.C."/>
            <person name="Farah C.S."/>
            <person name="Furlan L.R."/>
            <person name="Quaggio R.B."/>
            <person name="Monteiro-Vitorello C.B."/>
            <person name="Van Sluys M.A."/>
            <person name="Almeida N.F. Jr."/>
            <person name="Alves L.M.C."/>
            <person name="do Amaral A.M."/>
            <person name="Bertolini M.C."/>
            <person name="Camargo L.E.A."/>
            <person name="Camarotte G."/>
            <person name="Cannavan F."/>
            <person name="Cardozo J."/>
            <person name="Chambergo F."/>
            <person name="Ciapina L.P."/>
            <person name="Cicarelli R.M.B."/>
            <person name="Coutinho L.L."/>
            <person name="Cursino-Santos J.R."/>
            <person name="El-Dorry H."/>
            <person name="Faria J.B."/>
            <person name="Ferreira A.J.S."/>
            <person name="Ferreira R.C.C."/>
            <person name="Ferro M.I.T."/>
            <person name="Formighieri E.F."/>
            <person name="Franco M.C."/>
            <person name="Greggio C.C."/>
            <person name="Gruber A."/>
            <person name="Katsuyama A.M."/>
            <person name="Kishi L.T."/>
            <person name="Leite R.P."/>
            <person name="Lemos E.G.M."/>
            <person name="Lemos M.V.F."/>
            <person name="Locali E.C."/>
            <person name="Machado M.A."/>
            <person name="Madeira A.M.B.N."/>
            <person name="Martinez-Rossi N.M."/>
            <person name="Martins E.C."/>
            <person name="Meidanis J."/>
            <person name="Menck C.F.M."/>
            <person name="Miyaki C.Y."/>
            <person name="Moon D.H."/>
            <person name="Moreira L.M."/>
            <person name="Novo M.T.M."/>
            <person name="Okura V.K."/>
            <person name="Oliveira M.C."/>
            <person name="Oliveira V.R."/>
            <person name="Pereira H.A."/>
            <person name="Rossi A."/>
            <person name="Sena J.A.D."/>
            <person name="Silva C."/>
            <person name="de Souza R.F."/>
            <person name="Spinola L.A.F."/>
            <person name="Takita M.A."/>
            <person name="Tamura R.E."/>
            <person name="Teixeira E.C."/>
            <person name="Tezza R.I.D."/>
            <person name="Trindade dos Santos M."/>
            <person name="Truffi D."/>
            <person name="Tsai S.M."/>
            <person name="White F.F."/>
            <person name="Setubal J.C."/>
            <person name="Kitajima J.P."/>
        </authorList>
    </citation>
    <scope>NUCLEOTIDE SEQUENCE [LARGE SCALE GENOMIC DNA]</scope>
    <source>
        <strain>ATCC 33913 / DSM 3586 / NCPPB 528 / LMG 568 / P 25</strain>
    </source>
</reference>
<organism>
    <name type="scientific">Xanthomonas campestris pv. campestris (strain ATCC 33913 / DSM 3586 / NCPPB 528 / LMG 568 / P 25)</name>
    <dbReference type="NCBI Taxonomy" id="190485"/>
    <lineage>
        <taxon>Bacteria</taxon>
        <taxon>Pseudomonadati</taxon>
        <taxon>Pseudomonadota</taxon>
        <taxon>Gammaproteobacteria</taxon>
        <taxon>Lysobacterales</taxon>
        <taxon>Lysobacteraceae</taxon>
        <taxon>Xanthomonas</taxon>
    </lineage>
</organism>
<accession>Q8PAA6</accession>
<comment type="function">
    <text evidence="1">Catalyzes the hydrolytic cleavage of the carbon-nitrogen bond in imidazolone-5-propanoate to yield N-formimidoyl-L-glutamate. It is the third step in the universal histidine degradation pathway.</text>
</comment>
<comment type="catalytic activity">
    <reaction evidence="1">
        <text>4-imidazolone-5-propanoate + H2O = N-formimidoyl-L-glutamate</text>
        <dbReference type="Rhea" id="RHEA:23660"/>
        <dbReference type="ChEBI" id="CHEBI:15377"/>
        <dbReference type="ChEBI" id="CHEBI:58928"/>
        <dbReference type="ChEBI" id="CHEBI:77893"/>
        <dbReference type="EC" id="3.5.2.7"/>
    </reaction>
</comment>
<comment type="cofactor">
    <cofactor evidence="1">
        <name>Zn(2+)</name>
        <dbReference type="ChEBI" id="CHEBI:29105"/>
    </cofactor>
    <cofactor evidence="1">
        <name>Fe(3+)</name>
        <dbReference type="ChEBI" id="CHEBI:29034"/>
    </cofactor>
    <text evidence="1">Binds 1 zinc or iron ion per subunit.</text>
</comment>
<comment type="pathway">
    <text evidence="1">Amino-acid degradation; L-histidine degradation into L-glutamate; N-formimidoyl-L-glutamate from L-histidine: step 3/3.</text>
</comment>
<comment type="subcellular location">
    <subcellularLocation>
        <location evidence="1">Cytoplasm</location>
    </subcellularLocation>
</comment>
<comment type="similarity">
    <text evidence="1">Belongs to the metallo-dependent hydrolases superfamily. HutI family.</text>
</comment>
<comment type="sequence caution" evidence="2">
    <conflict type="erroneous initiation">
        <sequence resource="EMBL-CDS" id="AAM40875"/>
    </conflict>
</comment>
<evidence type="ECO:0000255" key="1">
    <source>
        <dbReference type="HAMAP-Rule" id="MF_00372"/>
    </source>
</evidence>
<evidence type="ECO:0000305" key="2"/>
<name>HUTI_XANCP</name>
<protein>
    <recommendedName>
        <fullName evidence="1">Imidazolonepropionase</fullName>
        <ecNumber evidence="1">3.5.2.7</ecNumber>
    </recommendedName>
    <alternativeName>
        <fullName evidence="1">Imidazolone-5-propionate hydrolase</fullName>
    </alternativeName>
</protein>
<keyword id="KW-0963">Cytoplasm</keyword>
<keyword id="KW-0369">Histidine metabolism</keyword>
<keyword id="KW-0378">Hydrolase</keyword>
<keyword id="KW-0408">Iron</keyword>
<keyword id="KW-0479">Metal-binding</keyword>
<keyword id="KW-1185">Reference proteome</keyword>
<keyword id="KW-0862">Zinc</keyword>
<proteinExistence type="inferred from homology"/>